<reference key="1">
    <citation type="journal article" date="1998" name="Science">
        <title>Genome sequence of the nematode C. elegans: a platform for investigating biology.</title>
        <authorList>
            <consortium name="The C. elegans sequencing consortium"/>
        </authorList>
    </citation>
    <scope>NUCLEOTIDE SEQUENCE [LARGE SCALE GENOMIC DNA]</scope>
    <source>
        <strain>Bristol N2</strain>
    </source>
</reference>
<keyword id="KW-0002">3D-structure</keyword>
<keyword id="KW-0067">ATP-binding</keyword>
<keyword id="KW-0469">Meiosis</keyword>
<keyword id="KW-0547">Nucleotide-binding</keyword>
<keyword id="KW-1185">Reference proteome</keyword>
<name>PCH2_CAEEL</name>
<sequence>MHEPMKTLKNIHAEIRICQKFPKSTVQKRFSEFEELIKAASKNARNWKPISSVELFQGDSSLNELFEKLVIGTCELRDGELFENVNDLTINPSNIHVYKLHKDGPLSQNIGDDDGDESIIGSQLWQLPCVEFDSIWENLIYDSNLKNEVMSYVAALARLSEKHVNTKIINVNRLILLTGPPGTGKTSLCKGLAQHLSIRMNDKYSKSVMLEINSHSLFSKWFSESGKLVQKMFDQIDELAEDEKCMVFVLIDEVESLGMCRESSSSRSEPSDAIRAVNALLTQIDRIRRRDNVLILCTSNLESTLDKALVDRADIVKNVGQPSDFARYSMLKSSIMELARIGVVIDNEVHTDYWPQDICDTKAPRNEFTEILFKIAQEARGLSGRAISMLPTLVYSKSPEETITLPNCMNLFLEAVKERLSRNN</sequence>
<evidence type="ECO:0000250" key="1"/>
<evidence type="ECO:0000255" key="2"/>
<evidence type="ECO:0000305" key="3"/>
<evidence type="ECO:0007829" key="4">
    <source>
        <dbReference type="PDB" id="4XGU"/>
    </source>
</evidence>
<organism>
    <name type="scientific">Caenorhabditis elegans</name>
    <dbReference type="NCBI Taxonomy" id="6239"/>
    <lineage>
        <taxon>Eukaryota</taxon>
        <taxon>Metazoa</taxon>
        <taxon>Ecdysozoa</taxon>
        <taxon>Nematoda</taxon>
        <taxon>Chromadorea</taxon>
        <taxon>Rhabditida</taxon>
        <taxon>Rhabditina</taxon>
        <taxon>Rhabditomorpha</taxon>
        <taxon>Rhabditoidea</taxon>
        <taxon>Rhabditidae</taxon>
        <taxon>Peloderinae</taxon>
        <taxon>Caenorhabditis</taxon>
    </lineage>
</organism>
<comment type="function">
    <text evidence="1">Plays a key role in chromosome recombination during meiosis.</text>
</comment>
<comment type="similarity">
    <text evidence="3">Belongs to the AAA ATPase family. PCH2 subfamily.</text>
</comment>
<gene>
    <name type="primary">pch-2</name>
    <name type="ORF">F10B5.5</name>
</gene>
<dbReference type="EMBL" id="Z48334">
    <property type="protein sequence ID" value="CAA88312.1"/>
    <property type="molecule type" value="Genomic_DNA"/>
</dbReference>
<dbReference type="PIR" id="T20692">
    <property type="entry name" value="T20692"/>
</dbReference>
<dbReference type="RefSeq" id="NP_495711.1">
    <property type="nucleotide sequence ID" value="NM_063310.9"/>
</dbReference>
<dbReference type="PDB" id="4XGU">
    <property type="method" value="X-ray"/>
    <property type="resolution" value="2.30 A"/>
    <property type="chains" value="A/B/C/D/E/F=1-424"/>
</dbReference>
<dbReference type="PDBsum" id="4XGU"/>
<dbReference type="SMR" id="Q09535"/>
<dbReference type="BioGRID" id="39642">
    <property type="interactions" value="8"/>
</dbReference>
<dbReference type="DIP" id="DIP-26661N"/>
<dbReference type="FunCoup" id="Q09535">
    <property type="interactions" value="2240"/>
</dbReference>
<dbReference type="STRING" id="6239.F10B5.5.1"/>
<dbReference type="PaxDb" id="6239-F10B5.5"/>
<dbReference type="PeptideAtlas" id="Q09535"/>
<dbReference type="EnsemblMetazoa" id="F10B5.5.1">
    <property type="protein sequence ID" value="F10B5.5.1"/>
    <property type="gene ID" value="WBGene00008641"/>
</dbReference>
<dbReference type="GeneID" id="174313"/>
<dbReference type="KEGG" id="cel:CELE_F10B5.5"/>
<dbReference type="UCSC" id="F10B5.5">
    <property type="organism name" value="c. elegans"/>
</dbReference>
<dbReference type="AGR" id="WB:WBGene00008641"/>
<dbReference type="CTD" id="174313"/>
<dbReference type="WormBase" id="F10B5.5">
    <property type="protein sequence ID" value="CE01547"/>
    <property type="gene ID" value="WBGene00008641"/>
    <property type="gene designation" value="pch-2"/>
</dbReference>
<dbReference type="eggNOG" id="KOG0744">
    <property type="taxonomic scope" value="Eukaryota"/>
</dbReference>
<dbReference type="GeneTree" id="ENSGT00940000170021"/>
<dbReference type="HOGENOM" id="CLU_028208_1_0_1"/>
<dbReference type="InParanoid" id="Q09535"/>
<dbReference type="OMA" id="HCEKLMQ"/>
<dbReference type="OrthoDB" id="10042665at2759"/>
<dbReference type="PhylomeDB" id="Q09535"/>
<dbReference type="SignaLink" id="Q09535"/>
<dbReference type="EvolutionaryTrace" id="Q09535"/>
<dbReference type="PRO" id="PR:Q09535"/>
<dbReference type="Proteomes" id="UP000001940">
    <property type="component" value="Chromosome II"/>
</dbReference>
<dbReference type="Bgee" id="WBGene00008641">
    <property type="expression patterns" value="Expressed in germ line (C elegans) and 4 other cell types or tissues"/>
</dbReference>
<dbReference type="GO" id="GO:0005694">
    <property type="term" value="C:chromosome"/>
    <property type="evidence" value="ECO:0000318"/>
    <property type="project" value="GO_Central"/>
</dbReference>
<dbReference type="GO" id="GO:0000776">
    <property type="term" value="C:kinetochore"/>
    <property type="evidence" value="ECO:0000314"/>
    <property type="project" value="WormBase"/>
</dbReference>
<dbReference type="GO" id="GO:0005634">
    <property type="term" value="C:nucleus"/>
    <property type="evidence" value="ECO:0000318"/>
    <property type="project" value="GO_Central"/>
</dbReference>
<dbReference type="GO" id="GO:0005524">
    <property type="term" value="F:ATP binding"/>
    <property type="evidence" value="ECO:0007669"/>
    <property type="project" value="UniProtKB-KW"/>
</dbReference>
<dbReference type="GO" id="GO:0016887">
    <property type="term" value="F:ATP hydrolysis activity"/>
    <property type="evidence" value="ECO:0007669"/>
    <property type="project" value="InterPro"/>
</dbReference>
<dbReference type="GO" id="GO:0051598">
    <property type="term" value="P:meiotic recombination checkpoint signaling"/>
    <property type="evidence" value="ECO:0000318"/>
    <property type="project" value="GO_Central"/>
</dbReference>
<dbReference type="GO" id="GO:0007131">
    <property type="term" value="P:reciprocal meiotic recombination"/>
    <property type="evidence" value="ECO:0000318"/>
    <property type="project" value="GO_Central"/>
</dbReference>
<dbReference type="CDD" id="cd19508">
    <property type="entry name" value="RecA-like_Pch2-like"/>
    <property type="match status" value="1"/>
</dbReference>
<dbReference type="FunFam" id="3.40.50.300:FF:001494">
    <property type="entry name" value="Pachytene checkpoint component Pch2"/>
    <property type="match status" value="1"/>
</dbReference>
<dbReference type="Gene3D" id="3.40.50.300">
    <property type="entry name" value="P-loop containing nucleotide triphosphate hydrolases"/>
    <property type="match status" value="1"/>
</dbReference>
<dbReference type="InterPro" id="IPR003593">
    <property type="entry name" value="AAA+_ATPase"/>
</dbReference>
<dbReference type="InterPro" id="IPR003959">
    <property type="entry name" value="ATPase_AAA_core"/>
</dbReference>
<dbReference type="InterPro" id="IPR003960">
    <property type="entry name" value="ATPase_AAA_CS"/>
</dbReference>
<dbReference type="InterPro" id="IPR001270">
    <property type="entry name" value="ClpA/B"/>
</dbReference>
<dbReference type="InterPro" id="IPR027417">
    <property type="entry name" value="P-loop_NTPase"/>
</dbReference>
<dbReference type="InterPro" id="IPR044539">
    <property type="entry name" value="Pch2-like"/>
</dbReference>
<dbReference type="InterPro" id="IPR054330">
    <property type="entry name" value="Pch2-like_N"/>
</dbReference>
<dbReference type="PANTHER" id="PTHR45991">
    <property type="entry name" value="PACHYTENE CHECKPOINT PROTEIN 2"/>
    <property type="match status" value="1"/>
</dbReference>
<dbReference type="PANTHER" id="PTHR45991:SF1">
    <property type="entry name" value="PACHYTENE CHECKPOINT PROTEIN 2 HOMOLOG"/>
    <property type="match status" value="1"/>
</dbReference>
<dbReference type="Pfam" id="PF00004">
    <property type="entry name" value="AAA"/>
    <property type="match status" value="1"/>
</dbReference>
<dbReference type="Pfam" id="PF23242">
    <property type="entry name" value="AAA_lid_TRIP13_C"/>
    <property type="match status" value="1"/>
</dbReference>
<dbReference type="Pfam" id="PF22107">
    <property type="entry name" value="Pch2_N"/>
    <property type="match status" value="1"/>
</dbReference>
<dbReference type="PRINTS" id="PR00300">
    <property type="entry name" value="CLPPROTEASEA"/>
</dbReference>
<dbReference type="SMART" id="SM00382">
    <property type="entry name" value="AAA"/>
    <property type="match status" value="1"/>
</dbReference>
<dbReference type="SUPFAM" id="SSF52540">
    <property type="entry name" value="P-loop containing nucleoside triphosphate hydrolases"/>
    <property type="match status" value="1"/>
</dbReference>
<dbReference type="PROSITE" id="PS00674">
    <property type="entry name" value="AAA"/>
    <property type="match status" value="1"/>
</dbReference>
<feature type="chain" id="PRO_0000084790" description="Putative pachytene checkpoint protein 2">
    <location>
        <begin position="1"/>
        <end position="424"/>
    </location>
</feature>
<feature type="binding site" evidence="2">
    <location>
        <begin position="179"/>
        <end position="186"/>
    </location>
    <ligand>
        <name>ATP</name>
        <dbReference type="ChEBI" id="CHEBI:30616"/>
    </ligand>
</feature>
<feature type="strand" evidence="4">
    <location>
        <begin position="12"/>
        <end position="17"/>
    </location>
</feature>
<feature type="strand" evidence="4">
    <location>
        <begin position="19"/>
        <end position="21"/>
    </location>
</feature>
<feature type="helix" evidence="4">
    <location>
        <begin position="25"/>
        <end position="28"/>
    </location>
</feature>
<feature type="helix" evidence="4">
    <location>
        <begin position="30"/>
        <end position="42"/>
    </location>
</feature>
<feature type="strand" evidence="4">
    <location>
        <begin position="48"/>
        <end position="50"/>
    </location>
</feature>
<feature type="strand" evidence="4">
    <location>
        <begin position="65"/>
        <end position="72"/>
    </location>
</feature>
<feature type="turn" evidence="4">
    <location>
        <begin position="92"/>
        <end position="94"/>
    </location>
</feature>
<feature type="strand" evidence="4">
    <location>
        <begin position="95"/>
        <end position="98"/>
    </location>
</feature>
<feature type="strand" evidence="4">
    <location>
        <begin position="123"/>
        <end position="129"/>
    </location>
</feature>
<feature type="helix" evidence="4">
    <location>
        <begin position="130"/>
        <end position="138"/>
    </location>
</feature>
<feature type="strand" evidence="4">
    <location>
        <begin position="142"/>
        <end position="144"/>
    </location>
</feature>
<feature type="helix" evidence="4">
    <location>
        <begin position="145"/>
        <end position="161"/>
    </location>
</feature>
<feature type="turn" evidence="4">
    <location>
        <begin position="166"/>
        <end position="168"/>
    </location>
</feature>
<feature type="strand" evidence="4">
    <location>
        <begin position="174"/>
        <end position="178"/>
    </location>
</feature>
<feature type="helix" evidence="4">
    <location>
        <begin position="185"/>
        <end position="199"/>
    </location>
</feature>
<feature type="turn" evidence="4">
    <location>
        <begin position="200"/>
        <end position="203"/>
    </location>
</feature>
<feature type="strand" evidence="4">
    <location>
        <begin position="205"/>
        <end position="213"/>
    </location>
</feature>
<feature type="helix" evidence="4">
    <location>
        <begin position="220"/>
        <end position="224"/>
    </location>
</feature>
<feature type="helix" evidence="4">
    <location>
        <begin position="228"/>
        <end position="241"/>
    </location>
</feature>
<feature type="strand" evidence="4">
    <location>
        <begin position="245"/>
        <end position="251"/>
    </location>
</feature>
<feature type="helix" evidence="4">
    <location>
        <begin position="275"/>
        <end position="288"/>
    </location>
</feature>
<feature type="strand" evidence="4">
    <location>
        <begin position="290"/>
        <end position="303"/>
    </location>
</feature>
<feature type="helix" evidence="4">
    <location>
        <begin position="307"/>
        <end position="311"/>
    </location>
</feature>
<feature type="strand" evidence="4">
    <location>
        <begin position="316"/>
        <end position="318"/>
    </location>
</feature>
<feature type="helix" evidence="4">
    <location>
        <begin position="324"/>
        <end position="341"/>
    </location>
</feature>
<feature type="strand" evidence="4">
    <location>
        <begin position="342"/>
        <end position="344"/>
    </location>
</feature>
<feature type="helix" evidence="4">
    <location>
        <begin position="351"/>
        <end position="353"/>
    </location>
</feature>
<feature type="strand" evidence="4">
    <location>
        <begin position="361"/>
        <end position="363"/>
    </location>
</feature>
<feature type="helix" evidence="4">
    <location>
        <begin position="367"/>
        <end position="378"/>
    </location>
</feature>
<feature type="strand" evidence="4">
    <location>
        <begin position="380"/>
        <end position="382"/>
    </location>
</feature>
<feature type="helix" evidence="4">
    <location>
        <begin position="384"/>
        <end position="387"/>
    </location>
</feature>
<feature type="helix" evidence="4">
    <location>
        <begin position="390"/>
        <end position="397"/>
    </location>
</feature>
<feature type="strand" evidence="4">
    <location>
        <begin position="399"/>
        <end position="403"/>
    </location>
</feature>
<feature type="helix" evidence="4">
    <location>
        <begin position="405"/>
        <end position="423"/>
    </location>
</feature>
<proteinExistence type="evidence at protein level"/>
<accession>Q09535</accession>
<protein>
    <recommendedName>
        <fullName>Putative pachytene checkpoint protein 2</fullName>
    </recommendedName>
</protein>